<keyword id="KW-0963">Cytoplasm</keyword>
<keyword id="KW-0206">Cytoskeleton</keyword>
<keyword id="KW-0378">Hydrolase</keyword>
<keyword id="KW-0496">Mitochondrion</keyword>
<keyword id="KW-0539">Nucleus</keyword>
<keyword id="KW-0645">Protease</keyword>
<keyword id="KW-1185">Reference proteome</keyword>
<keyword id="KW-0788">Thiol protease</keyword>
<keyword id="KW-0833">Ubl conjugation pathway</keyword>
<proteinExistence type="evidence at protein level"/>
<accession>Q09275</accession>
<organism>
    <name type="scientific">Caenorhabditis elegans</name>
    <dbReference type="NCBI Taxonomy" id="6239"/>
    <lineage>
        <taxon>Eukaryota</taxon>
        <taxon>Metazoa</taxon>
        <taxon>Ecdysozoa</taxon>
        <taxon>Nematoda</taxon>
        <taxon>Chromadorea</taxon>
        <taxon>Rhabditida</taxon>
        <taxon>Rhabditina</taxon>
        <taxon>Rhabditomorpha</taxon>
        <taxon>Rhabditoidea</taxon>
        <taxon>Rhabditidae</taxon>
        <taxon>Peloderinae</taxon>
        <taxon>Caenorhabditis</taxon>
    </lineage>
</organism>
<reference key="1">
    <citation type="journal article" date="1998" name="Science">
        <title>Genome sequence of the nematode C. elegans: a platform for investigating biology.</title>
        <authorList>
            <consortium name="The C. elegans sequencing consortium"/>
        </authorList>
    </citation>
    <scope>NUCLEOTIDE SEQUENCE [LARGE SCALE GENOMIC DNA]</scope>
    <source>
        <strain>Bristol N2</strain>
    </source>
</reference>
<reference key="2">
    <citation type="journal article" date="2014" name="Nat. Commun.">
        <title>Dynamic SUMO modification regulates mitotic chromosome assembly and cell cycle progression in Caenorhabditis elegans.</title>
        <authorList>
            <person name="Pelisch F."/>
            <person name="Sonneville R."/>
            <person name="Pourkarimi E."/>
            <person name="Agostinho A."/>
            <person name="Blow J.J."/>
            <person name="Gartner A."/>
            <person name="Hay R.T."/>
        </authorList>
    </citation>
    <scope>FUNCTION</scope>
    <scope>SUBCELLULAR LOCATION</scope>
    <scope>DISRUPTION PHENOTYPE</scope>
</reference>
<reference key="3">
    <citation type="journal article" date="2014" name="Proc. Natl. Acad. Sci. U.S.A.">
        <title>Controlled sumoylation of the mevalonate pathway enzyme HMGS-1 regulates metabolism during aging.</title>
        <authorList>
            <person name="Sapir A."/>
            <person name="Tsur A."/>
            <person name="Koorman T."/>
            <person name="Ching K."/>
            <person name="Mishra P."/>
            <person name="Bardenheier A."/>
            <person name="Podolsky L."/>
            <person name="Bening-Abu-Shach U."/>
            <person name="Boxem M."/>
            <person name="Chou T.F."/>
            <person name="Broday L."/>
            <person name="Sternberg P.W."/>
        </authorList>
    </citation>
    <scope>FUNCTION</scope>
    <scope>SUBCELLULAR LOCATION</scope>
    <scope>TISSUE SPECIFICITY</scope>
    <scope>DEVELOPMENTAL STAGE</scope>
    <scope>DISRUPTION PHENOTYPE</scope>
</reference>
<reference key="4">
    <citation type="journal article" date="2019" name="Elife">
        <title>SUMO peptidase ULP-4 regulates mitochondrial UPR-mediated innate immunity and lifespan extension.</title>
        <authorList>
            <person name="Gao K."/>
            <person name="Li Y."/>
            <person name="Hu S."/>
            <person name="Liu Y."/>
        </authorList>
    </citation>
    <scope>FUNCTION</scope>
    <scope>CATALYTIC ACTIVITY</scope>
    <scope>PATHWAY</scope>
    <scope>INDUCTION</scope>
    <scope>DISRUPTION PHENOTYPE</scope>
</reference>
<comment type="function">
    <text evidence="2 3 4 6">Protease required for deconjugation of smo-1 conjugates from target proteins which is necessary for cell cycle progression (Probable) (PubMed:25475837). Required for respiration and the maintenance of normal mitochondrial homeostasis (PubMed:25187565). In response to mitochondrial stress, required for the removal of smo-1 conjugates from the transcription factor dve-1, which promotes the translocation of dve-1 from the cytosol to the nucleus to initiate the mitochondrial unfolded protein response (PubMed:30642431). Furthermore, removes the smo-1 conjugates from the transcription factor atfs-1 to promote its stability and activate the mitochondrial unfolded protein response (PubMed:30642431). Also plays a role in promoting mitochondrial unfolded protein response-mediated innate immunity following infection with P.aeruginosa (PubMed:30642431).</text>
</comment>
<comment type="pathway">
    <text evidence="4">Protein modification; protein sumoylation.</text>
</comment>
<comment type="subcellular location">
    <subcellularLocation>
        <location evidence="3">Cytoplasm</location>
        <location evidence="3">Cytoskeleton</location>
        <location evidence="3">Microtubule organizing center</location>
        <location evidence="3">Centrosome</location>
    </subcellularLocation>
    <subcellularLocation>
        <location evidence="2">Nucleus</location>
    </subcellularLocation>
    <subcellularLocation>
        <location evidence="2">Cytoplasm</location>
    </subcellularLocation>
    <subcellularLocation>
        <location evidence="2">Mitochondrion matrix</location>
    </subcellularLocation>
    <text evidence="2 3">Localizes around the metaphase plate and the pericentriolar region and in the surroundings of the central spindle (PubMed:25475837). Translocates from cytoplasm to mitochondrion at late developmental stages (PubMed:25187565).</text>
</comment>
<comment type="tissue specificity">
    <text evidence="2">Expressed in hermaphrodite-specific neurons, head muscles, body wall muscles and pharyngeal cells.</text>
</comment>
<comment type="developmental stage">
    <text evidence="2">First expressed in body wall muscles and hypodermal cells during embryonic development to adulthood. Expressed in the pharynx and hypodermis from larval stages L1 to L3. Expressed in hermaphrodite-specific neurons from the L4 stage of larval development.</text>
</comment>
<comment type="induction">
    <text evidence="4">Up-regulated in response to mitochondrial stress induced by antimycin A.</text>
</comment>
<comment type="disruption phenotype">
    <text evidence="2 3 4">Animals are viable, but sterile and display phenotypes including an increased lifespan, age-dependent decline in their pharyngeal pumping rate and locomotion, reduced body fat and decreased oxygen consumption and an impaired ability to maintain mitochondrial membrane potential (PubMed:25187565). RNAi-mediated knockdown causes a number of defects during the first embryonic mitotic division including delayed spindle rotation, diminished spindle pole separation, two-fold faster chromosomal segregation, increased distance between chromosomes after anaphase onset, delayed mitotic exit, less efficient removal of smo-1 from chromatin after anaphase onset and prevention of air-2 from localizing to the spindle midzone (PubMed:25475837). RNAi-mediated knockdown results in increased sumoylation of hmgs-1 (PubMed:25187565). RNAi-mediated knockdown prevents dve-1 translocation to the nucleus in response to mitochondrial stress (PubMed:30642431). RNAi-mediated knockdown reduces the levels of afts-1, but levels are restored following inhibition of the proteasome (PubMed:30642431). RNAi-mediated knockdown reduces the survival of animals and results in impaired activation of the mitochondrial unfolded protein response following the inhibition of respiration induced by antimycin A (PubMed:30642431). RNAi-mediated knockdown impairs development and survival, and reduces the expression of immune response genes lys-2, zip-2, clec-4, clec-65 and ugt-61 following infection with P.aeruginosa (PubMed:30642431).</text>
</comment>
<comment type="similarity">
    <text evidence="5">Belongs to the peptidase C48 family.</text>
</comment>
<dbReference type="EC" id="3.4.22.-" evidence="6"/>
<dbReference type="EMBL" id="BX284602">
    <property type="protein sequence ID" value="CAA88104.2"/>
    <property type="molecule type" value="Genomic_DNA"/>
</dbReference>
<dbReference type="PIR" id="T19877">
    <property type="entry name" value="T19877"/>
</dbReference>
<dbReference type="RefSeq" id="NP_495703.2">
    <property type="nucleotide sequence ID" value="NM_063302.7"/>
</dbReference>
<dbReference type="SMR" id="Q09275"/>
<dbReference type="BioGRID" id="39636">
    <property type="interactions" value="4"/>
</dbReference>
<dbReference type="FunCoup" id="Q09275">
    <property type="interactions" value="18"/>
</dbReference>
<dbReference type="STRING" id="6239.C41C4.6.1"/>
<dbReference type="MEROPS" id="C48.A16"/>
<dbReference type="PaxDb" id="6239-C41C4.6"/>
<dbReference type="EnsemblMetazoa" id="C41C4.6.1">
    <property type="protein sequence ID" value="C41C4.6.1"/>
    <property type="gene ID" value="WBGene00006739"/>
</dbReference>
<dbReference type="GeneID" id="174307"/>
<dbReference type="KEGG" id="cel:CELE_C41C4.6"/>
<dbReference type="UCSC" id="C41C4.6">
    <property type="organism name" value="c. elegans"/>
</dbReference>
<dbReference type="AGR" id="WB:WBGene00006739"/>
<dbReference type="CTD" id="174307"/>
<dbReference type="WormBase" id="C41C4.6">
    <property type="protein sequence ID" value="CE43329"/>
    <property type="gene ID" value="WBGene00006739"/>
    <property type="gene designation" value="ulp-4"/>
</dbReference>
<dbReference type="eggNOG" id="KOG0779">
    <property type="taxonomic scope" value="Eukaryota"/>
</dbReference>
<dbReference type="GeneTree" id="ENSGT00940000172065"/>
<dbReference type="HOGENOM" id="CLU_724090_0_0_1"/>
<dbReference type="InParanoid" id="Q09275"/>
<dbReference type="OMA" id="NDEWTNQ"/>
<dbReference type="OrthoDB" id="442460at2759"/>
<dbReference type="PhylomeDB" id="Q09275"/>
<dbReference type="UniPathway" id="UPA00886"/>
<dbReference type="PRO" id="PR:Q09275"/>
<dbReference type="Proteomes" id="UP000001940">
    <property type="component" value="Chromosome II"/>
</dbReference>
<dbReference type="Bgee" id="WBGene00006739">
    <property type="expression patterns" value="Expressed in germ line (C elegans) and 4 other cell types or tissues"/>
</dbReference>
<dbReference type="GO" id="GO:0005813">
    <property type="term" value="C:centrosome"/>
    <property type="evidence" value="ECO:0007669"/>
    <property type="project" value="UniProtKB-SubCell"/>
</dbReference>
<dbReference type="GO" id="GO:0005737">
    <property type="term" value="C:cytoplasm"/>
    <property type="evidence" value="ECO:0000314"/>
    <property type="project" value="WormBase"/>
</dbReference>
<dbReference type="GO" id="GO:0005759">
    <property type="term" value="C:mitochondrial matrix"/>
    <property type="evidence" value="ECO:0000314"/>
    <property type="project" value="WormBase"/>
</dbReference>
<dbReference type="GO" id="GO:0005634">
    <property type="term" value="C:nucleus"/>
    <property type="evidence" value="ECO:0007669"/>
    <property type="project" value="UniProtKB-SubCell"/>
</dbReference>
<dbReference type="GO" id="GO:0016929">
    <property type="term" value="F:deSUMOylase activity"/>
    <property type="evidence" value="ECO:0000315"/>
    <property type="project" value="UniProtKB"/>
</dbReference>
<dbReference type="GO" id="GO:0061629">
    <property type="term" value="F:RNA polymerase II-specific DNA-binding transcription factor binding"/>
    <property type="evidence" value="ECO:0000353"/>
    <property type="project" value="UniProtKB"/>
</dbReference>
<dbReference type="GO" id="GO:0070139">
    <property type="term" value="F:SUMO-specific endopeptidase activity"/>
    <property type="evidence" value="ECO:0000318"/>
    <property type="project" value="GO_Central"/>
</dbReference>
<dbReference type="GO" id="GO:0003712">
    <property type="term" value="F:transcription coregulator activity"/>
    <property type="evidence" value="ECO:0000315"/>
    <property type="project" value="UniProtKB"/>
</dbReference>
<dbReference type="GO" id="GO:0008340">
    <property type="term" value="P:determination of adult lifespan"/>
    <property type="evidence" value="ECO:0000315"/>
    <property type="project" value="UniProtKB"/>
</dbReference>
<dbReference type="GO" id="GO:0045087">
    <property type="term" value="P:innate immune response"/>
    <property type="evidence" value="ECO:0000315"/>
    <property type="project" value="UniProtKB"/>
</dbReference>
<dbReference type="GO" id="GO:0034514">
    <property type="term" value="P:mitochondrial unfolded protein response"/>
    <property type="evidence" value="ECO:0000315"/>
    <property type="project" value="UniProtKB"/>
</dbReference>
<dbReference type="GO" id="GO:0042307">
    <property type="term" value="P:positive regulation of protein import into nucleus"/>
    <property type="evidence" value="ECO:0000315"/>
    <property type="project" value="UniProtKB"/>
</dbReference>
<dbReference type="GO" id="GO:0016926">
    <property type="term" value="P:protein desumoylation"/>
    <property type="evidence" value="ECO:0000315"/>
    <property type="project" value="UniProtKB"/>
</dbReference>
<dbReference type="GO" id="GO:0016925">
    <property type="term" value="P:protein sumoylation"/>
    <property type="evidence" value="ECO:0007669"/>
    <property type="project" value="UniProtKB-UniPathway"/>
</dbReference>
<dbReference type="GO" id="GO:0006508">
    <property type="term" value="P:proteolysis"/>
    <property type="evidence" value="ECO:0007669"/>
    <property type="project" value="UniProtKB-KW"/>
</dbReference>
<dbReference type="Gene3D" id="1.10.418.20">
    <property type="match status" value="1"/>
</dbReference>
<dbReference type="Gene3D" id="3.30.310.130">
    <property type="entry name" value="Ubiquitin-related"/>
    <property type="match status" value="1"/>
</dbReference>
<dbReference type="InterPro" id="IPR038765">
    <property type="entry name" value="Papain-like_cys_pep_sf"/>
</dbReference>
<dbReference type="InterPro" id="IPR003653">
    <property type="entry name" value="Peptidase_C48_C"/>
</dbReference>
<dbReference type="PANTHER" id="PTHR46915:SF2">
    <property type="entry name" value="UBIQUITIN-LIKE PROTEASE 4"/>
    <property type="match status" value="1"/>
</dbReference>
<dbReference type="PANTHER" id="PTHR46915">
    <property type="entry name" value="UBIQUITIN-LIKE PROTEASE 4-RELATED"/>
    <property type="match status" value="1"/>
</dbReference>
<dbReference type="Pfam" id="PF02902">
    <property type="entry name" value="Peptidase_C48"/>
    <property type="match status" value="1"/>
</dbReference>
<dbReference type="SUPFAM" id="SSF54001">
    <property type="entry name" value="Cysteine proteinases"/>
    <property type="match status" value="1"/>
</dbReference>
<dbReference type="PROSITE" id="PS50600">
    <property type="entry name" value="ULP_PROTEASE"/>
    <property type="match status" value="1"/>
</dbReference>
<gene>
    <name evidence="7" type="primary">ulp-4</name>
    <name evidence="7" type="ORF">C41C4.6</name>
</gene>
<protein>
    <recommendedName>
        <fullName>Ubiquitin-like protease 4</fullName>
        <ecNumber evidence="6">3.4.22.-</ecNumber>
    </recommendedName>
</protein>
<evidence type="ECO:0000256" key="1">
    <source>
        <dbReference type="SAM" id="MobiDB-lite"/>
    </source>
</evidence>
<evidence type="ECO:0000269" key="2">
    <source>
    </source>
</evidence>
<evidence type="ECO:0000269" key="3">
    <source>
    </source>
</evidence>
<evidence type="ECO:0000269" key="4">
    <source>
    </source>
</evidence>
<evidence type="ECO:0000305" key="5"/>
<evidence type="ECO:0000305" key="6">
    <source>
    </source>
</evidence>
<evidence type="ECO:0000312" key="7">
    <source>
        <dbReference type="WormBase" id="C41C4.6"/>
    </source>
</evidence>
<sequence>MEVSTSYCTPAVNFKYGSFQDSDVSMREDDLFRMGSYNSQGYYADGTHLDGSIGEEDETSSGSNDQHMDFEEDDFDMESSMTEDLVDEDEEEEDEEDNDEWTNQKRTDNQNSVAYYAAMEMLRIRFPFQSIAIRISDFCCLQEKDLLNDTMIDFYLNHIVEHVLPDSNGSNVTVLPSIFWHNLSLRQHAFDSEDEKMMSDEQKMDLKFGDLHDFVADFDLQDFDYIVVPVNEWEHWSLAVICHPFTAQARTVIFDSQLTADLNNLQNMATLIESFMKYSYEKRTGNAMPFPLPCILPQRMPQQTNNFDCGIFIAEFARRFLLSPPKDLDNFDFAREYPDFSTATKRTEMQRVVLSLSTNRARWRPLVELLNGYSTAAPHRAL</sequence>
<feature type="chain" id="PRO_0000101737" description="Ubiquitin-like protease 4">
    <location>
        <begin position="1"/>
        <end position="382"/>
    </location>
</feature>
<feature type="region of interest" description="Disordered" evidence="1">
    <location>
        <begin position="46"/>
        <end position="106"/>
    </location>
</feature>
<feature type="compositionally biased region" description="Acidic residues" evidence="1">
    <location>
        <begin position="84"/>
        <end position="100"/>
    </location>
</feature>
<name>ULP4_CAEEL</name>